<proteinExistence type="inferred from homology"/>
<gene>
    <name evidence="1" type="primary">queC</name>
    <name type="ordered locus">EAT1b_1993</name>
</gene>
<name>QUEC_EXISA</name>
<accession>C4L0V4</accession>
<evidence type="ECO:0000255" key="1">
    <source>
        <dbReference type="HAMAP-Rule" id="MF_01633"/>
    </source>
</evidence>
<reference key="1">
    <citation type="journal article" date="2011" name="J. Bacteriol.">
        <title>Complete genome sequence of the Thermophilic Bacterium Exiguobacterium sp. AT1b.</title>
        <authorList>
            <person name="Vishnivetskaya T.A."/>
            <person name="Lucas S."/>
            <person name="Copeland A."/>
            <person name="Lapidus A."/>
            <person name="Glavina del Rio T."/>
            <person name="Dalin E."/>
            <person name="Tice H."/>
            <person name="Bruce D.C."/>
            <person name="Goodwin L.A."/>
            <person name="Pitluck S."/>
            <person name="Saunders E."/>
            <person name="Brettin T."/>
            <person name="Detter C."/>
            <person name="Han C."/>
            <person name="Larimer F."/>
            <person name="Land M.L."/>
            <person name="Hauser L.J."/>
            <person name="Kyrpides N.C."/>
            <person name="Ovchinnikova G."/>
            <person name="Kathariou S."/>
            <person name="Ramaley R.F."/>
            <person name="Rodrigues D.F."/>
            <person name="Hendrix C."/>
            <person name="Richardson P."/>
            <person name="Tiedje J.M."/>
        </authorList>
    </citation>
    <scope>NUCLEOTIDE SEQUENCE [LARGE SCALE GENOMIC DNA]</scope>
    <source>
        <strain>ATCC BAA-1283 / AT1b</strain>
    </source>
</reference>
<comment type="function">
    <text evidence="1">Catalyzes the ATP-dependent conversion of 7-carboxy-7-deazaguanine (CDG) to 7-cyano-7-deazaguanine (preQ(0)).</text>
</comment>
<comment type="catalytic activity">
    <reaction evidence="1">
        <text>7-carboxy-7-deazaguanine + NH4(+) + ATP = 7-cyano-7-deazaguanine + ADP + phosphate + H2O + H(+)</text>
        <dbReference type="Rhea" id="RHEA:27982"/>
        <dbReference type="ChEBI" id="CHEBI:15377"/>
        <dbReference type="ChEBI" id="CHEBI:15378"/>
        <dbReference type="ChEBI" id="CHEBI:28938"/>
        <dbReference type="ChEBI" id="CHEBI:30616"/>
        <dbReference type="ChEBI" id="CHEBI:43474"/>
        <dbReference type="ChEBI" id="CHEBI:45075"/>
        <dbReference type="ChEBI" id="CHEBI:61036"/>
        <dbReference type="ChEBI" id="CHEBI:456216"/>
        <dbReference type="EC" id="6.3.4.20"/>
    </reaction>
</comment>
<comment type="cofactor">
    <cofactor evidence="1">
        <name>Zn(2+)</name>
        <dbReference type="ChEBI" id="CHEBI:29105"/>
    </cofactor>
    <text evidence="1">Binds 1 zinc ion per subunit.</text>
</comment>
<comment type="pathway">
    <text evidence="1">Purine metabolism; 7-cyano-7-deazaguanine biosynthesis.</text>
</comment>
<comment type="subunit">
    <text evidence="1">Homodimer.</text>
</comment>
<comment type="similarity">
    <text evidence="1">Belongs to the QueC family.</text>
</comment>
<protein>
    <recommendedName>
        <fullName evidence="1">7-cyano-7-deazaguanine synthase</fullName>
        <ecNumber evidence="1">6.3.4.20</ecNumber>
    </recommendedName>
    <alternativeName>
        <fullName evidence="1">7-cyano-7-carbaguanine synthase</fullName>
    </alternativeName>
    <alternativeName>
        <fullName evidence="1">PreQ(0) synthase</fullName>
    </alternativeName>
    <alternativeName>
        <fullName evidence="1">Queuosine biosynthesis protein QueC</fullName>
    </alternativeName>
</protein>
<sequence>MQHEKALVVFSGGQDSTTCLFWAKQQFSHVEAVTFAYGQRHDAEIEVAKEIAAELDVPHHILDLSLLGQLTSNALTRHDLDIDNADVPNTFVDGRNHLFLSFAAVMAKQLGMHHIVTGVCETDFSGYPDCRDQFIKSLNVTLNLAMDYPFVIDTPLMWLDKKETWALADELGAFDYVKERTLTCYNGVIGSGCGECPACKLRQNGLTAYEEVRV</sequence>
<dbReference type="EC" id="6.3.4.20" evidence="1"/>
<dbReference type="EMBL" id="CP001615">
    <property type="protein sequence ID" value="ACQ70917.1"/>
    <property type="molecule type" value="Genomic_DNA"/>
</dbReference>
<dbReference type="RefSeq" id="WP_015880476.1">
    <property type="nucleotide sequence ID" value="NC_012673.1"/>
</dbReference>
<dbReference type="SMR" id="C4L0V4"/>
<dbReference type="STRING" id="360911.EAT1b_1993"/>
<dbReference type="KEGG" id="eat:EAT1b_1993"/>
<dbReference type="eggNOG" id="COG0603">
    <property type="taxonomic scope" value="Bacteria"/>
</dbReference>
<dbReference type="HOGENOM" id="CLU_081854_0_0_9"/>
<dbReference type="OrthoDB" id="9789567at2"/>
<dbReference type="UniPathway" id="UPA00391"/>
<dbReference type="Proteomes" id="UP000000716">
    <property type="component" value="Chromosome"/>
</dbReference>
<dbReference type="GO" id="GO:0005524">
    <property type="term" value="F:ATP binding"/>
    <property type="evidence" value="ECO:0007669"/>
    <property type="project" value="UniProtKB-UniRule"/>
</dbReference>
<dbReference type="GO" id="GO:0016879">
    <property type="term" value="F:ligase activity, forming carbon-nitrogen bonds"/>
    <property type="evidence" value="ECO:0007669"/>
    <property type="project" value="UniProtKB-UniRule"/>
</dbReference>
<dbReference type="GO" id="GO:0008270">
    <property type="term" value="F:zinc ion binding"/>
    <property type="evidence" value="ECO:0007669"/>
    <property type="project" value="UniProtKB-UniRule"/>
</dbReference>
<dbReference type="GO" id="GO:0008616">
    <property type="term" value="P:queuosine biosynthetic process"/>
    <property type="evidence" value="ECO:0007669"/>
    <property type="project" value="UniProtKB-UniRule"/>
</dbReference>
<dbReference type="CDD" id="cd01995">
    <property type="entry name" value="QueC-like"/>
    <property type="match status" value="1"/>
</dbReference>
<dbReference type="FunFam" id="3.40.50.620:FF:000017">
    <property type="entry name" value="7-cyano-7-deazaguanine synthase"/>
    <property type="match status" value="1"/>
</dbReference>
<dbReference type="Gene3D" id="3.40.50.620">
    <property type="entry name" value="HUPs"/>
    <property type="match status" value="1"/>
</dbReference>
<dbReference type="HAMAP" id="MF_01633">
    <property type="entry name" value="QueC"/>
    <property type="match status" value="1"/>
</dbReference>
<dbReference type="InterPro" id="IPR018317">
    <property type="entry name" value="QueC"/>
</dbReference>
<dbReference type="InterPro" id="IPR014729">
    <property type="entry name" value="Rossmann-like_a/b/a_fold"/>
</dbReference>
<dbReference type="NCBIfam" id="TIGR00364">
    <property type="entry name" value="7-cyano-7-deazaguanine synthase QueC"/>
    <property type="match status" value="1"/>
</dbReference>
<dbReference type="PANTHER" id="PTHR42914">
    <property type="entry name" value="7-CYANO-7-DEAZAGUANINE SYNTHASE"/>
    <property type="match status" value="1"/>
</dbReference>
<dbReference type="PANTHER" id="PTHR42914:SF1">
    <property type="entry name" value="7-CYANO-7-DEAZAGUANINE SYNTHASE"/>
    <property type="match status" value="1"/>
</dbReference>
<dbReference type="Pfam" id="PF06508">
    <property type="entry name" value="QueC"/>
    <property type="match status" value="1"/>
</dbReference>
<dbReference type="PIRSF" id="PIRSF006293">
    <property type="entry name" value="ExsB"/>
    <property type="match status" value="1"/>
</dbReference>
<dbReference type="SUPFAM" id="SSF52402">
    <property type="entry name" value="Adenine nucleotide alpha hydrolases-like"/>
    <property type="match status" value="1"/>
</dbReference>
<organism>
    <name type="scientific">Exiguobacterium sp. (strain ATCC BAA-1283 / AT1b)</name>
    <dbReference type="NCBI Taxonomy" id="360911"/>
    <lineage>
        <taxon>Bacteria</taxon>
        <taxon>Bacillati</taxon>
        <taxon>Bacillota</taxon>
        <taxon>Bacilli</taxon>
        <taxon>Bacillales</taxon>
        <taxon>Bacillales Family XII. Incertae Sedis</taxon>
        <taxon>Exiguobacterium</taxon>
    </lineage>
</organism>
<keyword id="KW-0067">ATP-binding</keyword>
<keyword id="KW-0436">Ligase</keyword>
<keyword id="KW-0479">Metal-binding</keyword>
<keyword id="KW-0547">Nucleotide-binding</keyword>
<keyword id="KW-0671">Queuosine biosynthesis</keyword>
<keyword id="KW-0862">Zinc</keyword>
<feature type="chain" id="PRO_1000215791" description="7-cyano-7-deazaguanine synthase">
    <location>
        <begin position="1"/>
        <end position="214"/>
    </location>
</feature>
<feature type="binding site" evidence="1">
    <location>
        <begin position="10"/>
        <end position="20"/>
    </location>
    <ligand>
        <name>ATP</name>
        <dbReference type="ChEBI" id="CHEBI:30616"/>
    </ligand>
</feature>
<feature type="binding site" evidence="1">
    <location>
        <position position="184"/>
    </location>
    <ligand>
        <name>Zn(2+)</name>
        <dbReference type="ChEBI" id="CHEBI:29105"/>
    </ligand>
</feature>
<feature type="binding site" evidence="1">
    <location>
        <position position="193"/>
    </location>
    <ligand>
        <name>Zn(2+)</name>
        <dbReference type="ChEBI" id="CHEBI:29105"/>
    </ligand>
</feature>
<feature type="binding site" evidence="1">
    <location>
        <position position="196"/>
    </location>
    <ligand>
        <name>Zn(2+)</name>
        <dbReference type="ChEBI" id="CHEBI:29105"/>
    </ligand>
</feature>
<feature type="binding site" evidence="1">
    <location>
        <position position="199"/>
    </location>
    <ligand>
        <name>Zn(2+)</name>
        <dbReference type="ChEBI" id="CHEBI:29105"/>
    </ligand>
</feature>